<gene>
    <name evidence="1" type="primary">ift56</name>
    <name type="synonym">ttc26</name>
</gene>
<proteinExistence type="evidence at transcript level"/>
<dbReference type="EMBL" id="BC136035">
    <property type="protein sequence ID" value="AAI36036.1"/>
    <property type="molecule type" value="mRNA"/>
</dbReference>
<dbReference type="RefSeq" id="NP_001096401.1">
    <property type="nucleotide sequence ID" value="NM_001102931.1"/>
</dbReference>
<dbReference type="SMR" id="A4III8"/>
<dbReference type="FunCoup" id="A4III8">
    <property type="interactions" value="347"/>
</dbReference>
<dbReference type="STRING" id="8364.ENSXETP00000032012"/>
<dbReference type="PaxDb" id="8364-ENSXETP00000029419"/>
<dbReference type="DNASU" id="100125003"/>
<dbReference type="GeneID" id="100125003"/>
<dbReference type="KEGG" id="xtr:100125003"/>
<dbReference type="AGR" id="Xenbase:XB-GENE-1002214"/>
<dbReference type="CTD" id="79989"/>
<dbReference type="Xenbase" id="XB-GENE-1002214">
    <property type="gene designation" value="ift56"/>
</dbReference>
<dbReference type="eggNOG" id="KOG3785">
    <property type="taxonomic scope" value="Eukaryota"/>
</dbReference>
<dbReference type="HOGENOM" id="CLU_036306_2_0_1"/>
<dbReference type="InParanoid" id="A4III8"/>
<dbReference type="OMA" id="FIIRRDY"/>
<dbReference type="OrthoDB" id="95390at2759"/>
<dbReference type="Proteomes" id="UP000008143">
    <property type="component" value="Chromosome 4"/>
</dbReference>
<dbReference type="ExpressionAtlas" id="A4III8">
    <property type="expression patterns" value="differential"/>
</dbReference>
<dbReference type="GO" id="GO:0005929">
    <property type="term" value="C:cilium"/>
    <property type="evidence" value="ECO:0000250"/>
    <property type="project" value="UniProtKB"/>
</dbReference>
<dbReference type="GO" id="GO:0030992">
    <property type="term" value="C:intraciliary transport particle B"/>
    <property type="evidence" value="ECO:0000250"/>
    <property type="project" value="UniProtKB"/>
</dbReference>
<dbReference type="GO" id="GO:0035082">
    <property type="term" value="P:axoneme assembly"/>
    <property type="evidence" value="ECO:0000250"/>
    <property type="project" value="UniProtKB"/>
</dbReference>
<dbReference type="GO" id="GO:0060271">
    <property type="term" value="P:cilium assembly"/>
    <property type="evidence" value="ECO:0000250"/>
    <property type="project" value="UniProtKB"/>
</dbReference>
<dbReference type="GO" id="GO:0042073">
    <property type="term" value="P:intraciliary transport"/>
    <property type="evidence" value="ECO:0000250"/>
    <property type="project" value="UniProtKB"/>
</dbReference>
<dbReference type="GO" id="GO:0061512">
    <property type="term" value="P:protein localization to cilium"/>
    <property type="evidence" value="ECO:0000250"/>
    <property type="project" value="UniProtKB"/>
</dbReference>
<dbReference type="GO" id="GO:0015031">
    <property type="term" value="P:protein transport"/>
    <property type="evidence" value="ECO:0007669"/>
    <property type="project" value="UniProtKB-KW"/>
</dbReference>
<dbReference type="GO" id="GO:0007224">
    <property type="term" value="P:smoothened signaling pathway"/>
    <property type="evidence" value="ECO:0000250"/>
    <property type="project" value="UniProtKB"/>
</dbReference>
<dbReference type="FunFam" id="1.25.40.10:FF:000588">
    <property type="entry name" value="Intraflagellar transport protein 56"/>
    <property type="match status" value="1"/>
</dbReference>
<dbReference type="FunFam" id="1.25.40.10:FF:000136">
    <property type="entry name" value="Tetratricopeptide repeat domain 26"/>
    <property type="match status" value="1"/>
</dbReference>
<dbReference type="FunFam" id="1.25.40.10:FF:000271">
    <property type="entry name" value="Tetratricopeptide repeat domain 26"/>
    <property type="match status" value="1"/>
</dbReference>
<dbReference type="Gene3D" id="1.25.40.10">
    <property type="entry name" value="Tetratricopeptide repeat domain"/>
    <property type="match status" value="2"/>
</dbReference>
<dbReference type="InterPro" id="IPR011990">
    <property type="entry name" value="TPR-like_helical_dom_sf"/>
</dbReference>
<dbReference type="InterPro" id="IPR019734">
    <property type="entry name" value="TPR_rpt"/>
</dbReference>
<dbReference type="InterPro" id="IPR030511">
    <property type="entry name" value="TTC26"/>
</dbReference>
<dbReference type="PANTHER" id="PTHR14781">
    <property type="entry name" value="INTRAFLAGELLAR TRANSPORT PROTEIN 56"/>
    <property type="match status" value="1"/>
</dbReference>
<dbReference type="PANTHER" id="PTHR14781:SF0">
    <property type="entry name" value="INTRAFLAGELLAR TRANSPORT PROTEIN 56"/>
    <property type="match status" value="1"/>
</dbReference>
<dbReference type="Pfam" id="PF13181">
    <property type="entry name" value="TPR_8"/>
    <property type="match status" value="1"/>
</dbReference>
<dbReference type="SMART" id="SM00028">
    <property type="entry name" value="TPR"/>
    <property type="match status" value="3"/>
</dbReference>
<dbReference type="SUPFAM" id="SSF48452">
    <property type="entry name" value="TPR-like"/>
    <property type="match status" value="3"/>
</dbReference>
<dbReference type="PROSITE" id="PS50293">
    <property type="entry name" value="TPR_REGION"/>
    <property type="match status" value="2"/>
</dbReference>
<keyword id="KW-0966">Cell projection</keyword>
<keyword id="KW-0969">Cilium</keyword>
<keyword id="KW-0653">Protein transport</keyword>
<keyword id="KW-1185">Reference proteome</keyword>
<keyword id="KW-0677">Repeat</keyword>
<keyword id="KW-0802">TPR repeat</keyword>
<keyword id="KW-0813">Transport</keyword>
<feature type="chain" id="PRO_0000289087" description="Intraflagellar transport protein 56">
    <location>
        <begin position="1"/>
        <end position="554"/>
    </location>
</feature>
<feature type="repeat" description="TPR 1">
    <location>
        <begin position="57"/>
        <end position="90"/>
    </location>
</feature>
<feature type="repeat" description="TPR 2">
    <location>
        <begin position="92"/>
        <end position="125"/>
    </location>
</feature>
<feature type="repeat" description="TPR 3">
    <location>
        <begin position="151"/>
        <end position="184"/>
    </location>
</feature>
<feature type="repeat" description="TPR 4">
    <location>
        <begin position="468"/>
        <end position="501"/>
    </location>
</feature>
<feature type="region of interest" description="Disordered" evidence="2">
    <location>
        <begin position="1"/>
        <end position="23"/>
    </location>
</feature>
<reference key="1">
    <citation type="submission" date="2007-03" db="EMBL/GenBank/DDBJ databases">
        <authorList>
            <consortium name="NIH - Xenopus Gene Collection (XGC) project"/>
        </authorList>
    </citation>
    <scope>NUCLEOTIDE SEQUENCE [LARGE SCALE MRNA]</scope>
    <source>
        <tissue>Brain</tissue>
    </source>
</reference>
<evidence type="ECO:0000250" key="1">
    <source>
        <dbReference type="UniProtKB" id="Q8BS45"/>
    </source>
</evidence>
<evidence type="ECO:0000256" key="2">
    <source>
        <dbReference type="SAM" id="MobiDB-lite"/>
    </source>
</evidence>
<evidence type="ECO:0000305" key="3"/>
<organism>
    <name type="scientific">Xenopus tropicalis</name>
    <name type="common">Western clawed frog</name>
    <name type="synonym">Silurana tropicalis</name>
    <dbReference type="NCBI Taxonomy" id="8364"/>
    <lineage>
        <taxon>Eukaryota</taxon>
        <taxon>Metazoa</taxon>
        <taxon>Chordata</taxon>
        <taxon>Craniata</taxon>
        <taxon>Vertebrata</taxon>
        <taxon>Euteleostomi</taxon>
        <taxon>Amphibia</taxon>
        <taxon>Batrachia</taxon>
        <taxon>Anura</taxon>
        <taxon>Pipoidea</taxon>
        <taxon>Pipidae</taxon>
        <taxon>Xenopodinae</taxon>
        <taxon>Xenopus</taxon>
        <taxon>Silurana</taxon>
    </lineage>
</organism>
<comment type="function">
    <text evidence="1">Component of the intraflagellar transport (IFT) complex B required for transport of proteins in the motile cilium. Required for transport of specific ciliary cargo proteins related to motility, while it is neither required for IFT complex B assembly or motion nor for cilium assembly. Plays a key role in maintaining the integrity of the IFT complex B and the proper ciliary localization of the IFT complex B components. Essential for maintaining proper microtubule organization within the ciliary axoneme.</text>
</comment>
<comment type="subunit">
    <text evidence="1">Component of the IFT complex B.</text>
</comment>
<comment type="subcellular location">
    <subcellularLocation>
        <location evidence="1">Cell projection</location>
        <location evidence="1">Cilium</location>
    </subcellularLocation>
</comment>
<comment type="similarity">
    <text evidence="3">Belongs to the IFT56 family.</text>
</comment>
<accession>A4III8</accession>
<name>IFT56_XENTR</name>
<protein>
    <recommendedName>
        <fullName evidence="1">Intraflagellar transport protein 56</fullName>
    </recommendedName>
    <alternativeName>
        <fullName>Tetratricopeptide repeat protein 26</fullName>
        <shortName>TPR repeat protein 26</shortName>
    </alternativeName>
</protein>
<sequence length="554" mass="63893">MMLSRAKPAVGNEVQQIDKKKKKGKKVPRLDELLAQRDFTGAITLLEFKRQVGESEEDTELWIGYCSFHLGDYKRSLEVFKALSQQEGCNPDVWVNLACTSFFLGMYKEADEAANKAPKSRLQNRLLFHLAHKFNDEKRLMVFHQNLQDVIEDQLSLASIHYMRSHYQEAIDIYKRILLENRDFLALNVYVALCYYKLDYYDVSQEVLAVYLQQVPDSTIALNLKACNHFRLYNGKAAEAELKGLMDSTSSPIEFAKELIKHNLVVFRAGEGALQVLPPLVDVIPEARLNLVIYYLRQDDVQEAFNLIKDLEPSTPQEYILKGVVNASLGQELGSRDHLKIAQQFFQLVGGSASECDTIPGRQCMASCFFLLRQFDDVLIYLNSIKSYFYNDDTFNFNYAQAKAAVGNYKEAEEVFLLIQNEKIKNDYTYLSWLARCYIMNKKPRMAWELYLKMETSGESFSLLQLIANDCYKMGHFYYAAKAFDILERLDPSPEYWEGKRGACVGIFQMILAGREPKETLREVLNLLRSTGNTQVEYIIRILKKWGKENRVPV</sequence>